<gene>
    <name type="primary">Tbr1</name>
</gene>
<name>TBR1_MOUSE</name>
<feature type="chain" id="PRO_0000184458" description="T-box brain protein 1">
    <location>
        <begin position="1"/>
        <end position="681"/>
    </location>
</feature>
<feature type="DNA-binding region" description="T-box" evidence="2">
    <location>
        <begin position="213"/>
        <end position="393"/>
    </location>
</feature>
<feature type="region of interest" description="Disordered" evidence="3">
    <location>
        <begin position="43"/>
        <end position="83"/>
    </location>
</feature>
<feature type="region of interest" description="Disordered" evidence="3">
    <location>
        <begin position="108"/>
        <end position="127"/>
    </location>
</feature>
<feature type="region of interest" description="Disordered" evidence="3">
    <location>
        <begin position="447"/>
        <end position="483"/>
    </location>
</feature>
<feature type="region of interest" description="Disordered" evidence="3">
    <location>
        <begin position="597"/>
        <end position="655"/>
    </location>
</feature>
<feature type="compositionally biased region" description="Polar residues" evidence="3">
    <location>
        <begin position="58"/>
        <end position="68"/>
    </location>
</feature>
<feature type="compositionally biased region" description="Low complexity" evidence="3">
    <location>
        <begin position="108"/>
        <end position="122"/>
    </location>
</feature>
<feature type="compositionally biased region" description="Polar residues" evidence="3">
    <location>
        <begin position="462"/>
        <end position="472"/>
    </location>
</feature>
<feature type="compositionally biased region" description="Low complexity" evidence="3">
    <location>
        <begin position="618"/>
        <end position="628"/>
    </location>
</feature>
<feature type="modified residue" description="Phosphothreonine" evidence="9">
    <location>
        <position position="408"/>
    </location>
</feature>
<feature type="modified residue" description="Phosphoserine" evidence="9">
    <location>
        <position position="410"/>
    </location>
</feature>
<feature type="modified residue" description="Phosphoserine" evidence="9">
    <location>
        <position position="594"/>
    </location>
</feature>
<feature type="modified residue" description="Phosphoserine" evidence="9">
    <location>
        <position position="640"/>
    </location>
</feature>
<feature type="sequence conflict" description="In Ref. 1; AAA92011." evidence="8" ref="1">
    <original>K</original>
    <variation>E</variation>
    <location>
        <position position="53"/>
    </location>
</feature>
<evidence type="ECO:0000250" key="1">
    <source>
        <dbReference type="UniProtKB" id="Q16650"/>
    </source>
</evidence>
<evidence type="ECO:0000255" key="2">
    <source>
        <dbReference type="PROSITE-ProRule" id="PRU00201"/>
    </source>
</evidence>
<evidence type="ECO:0000256" key="3">
    <source>
        <dbReference type="SAM" id="MobiDB-lite"/>
    </source>
</evidence>
<evidence type="ECO:0000269" key="4">
    <source>
    </source>
</evidence>
<evidence type="ECO:0000269" key="5">
    <source>
    </source>
</evidence>
<evidence type="ECO:0000269" key="6">
    <source>
    </source>
</evidence>
<evidence type="ECO:0000269" key="7">
    <source>
    </source>
</evidence>
<evidence type="ECO:0000305" key="8"/>
<evidence type="ECO:0007744" key="9">
    <source>
    </source>
</evidence>
<accession>Q64336</accession>
<accession>Q7TSY9</accession>
<protein>
    <recommendedName>
        <fullName>T-box brain protein 1</fullName>
        <shortName>T-brain-1</shortName>
        <shortName>TBR-1</shortName>
    </recommendedName>
    <alternativeName>
        <fullName>TES-56</fullName>
    </alternativeName>
</protein>
<keyword id="KW-0238">DNA-binding</keyword>
<keyword id="KW-0539">Nucleus</keyword>
<keyword id="KW-0597">Phosphoprotein</keyword>
<keyword id="KW-1185">Reference proteome</keyword>
<keyword id="KW-0804">Transcription</keyword>
<keyword id="KW-0805">Transcription regulation</keyword>
<organism>
    <name type="scientific">Mus musculus</name>
    <name type="common">Mouse</name>
    <dbReference type="NCBI Taxonomy" id="10090"/>
    <lineage>
        <taxon>Eukaryota</taxon>
        <taxon>Metazoa</taxon>
        <taxon>Chordata</taxon>
        <taxon>Craniata</taxon>
        <taxon>Vertebrata</taxon>
        <taxon>Euteleostomi</taxon>
        <taxon>Mammalia</taxon>
        <taxon>Eutheria</taxon>
        <taxon>Euarchontoglires</taxon>
        <taxon>Glires</taxon>
        <taxon>Rodentia</taxon>
        <taxon>Myomorpha</taxon>
        <taxon>Muroidea</taxon>
        <taxon>Muridae</taxon>
        <taxon>Murinae</taxon>
        <taxon>Mus</taxon>
        <taxon>Mus</taxon>
    </lineage>
</organism>
<reference key="1">
    <citation type="journal article" date="1995" name="Neuron">
        <title>T-brain-1: a homolog of Brachyury whose expression defines molecularly distinct domains within the cerebral cortex.</title>
        <authorList>
            <person name="Bulfone A."/>
            <person name="Smiga S.M."/>
            <person name="Shimamura K."/>
            <person name="Peterson A."/>
            <person name="Puelles L."/>
            <person name="Rubenstein J.L.R."/>
        </authorList>
    </citation>
    <scope>NUCLEOTIDE SEQUENCE [MRNA]</scope>
    <source>
        <strain>BALB/cJ</strain>
        <tissue>Fetal brain</tissue>
    </source>
</reference>
<reference key="2">
    <citation type="journal article" date="2009" name="PLoS Biol.">
        <title>Lineage-specific biology revealed by a finished genome assembly of the mouse.</title>
        <authorList>
            <person name="Church D.M."/>
            <person name="Goodstadt L."/>
            <person name="Hillier L.W."/>
            <person name="Zody M.C."/>
            <person name="Goldstein S."/>
            <person name="She X."/>
            <person name="Bult C.J."/>
            <person name="Agarwala R."/>
            <person name="Cherry J.L."/>
            <person name="DiCuccio M."/>
            <person name="Hlavina W."/>
            <person name="Kapustin Y."/>
            <person name="Meric P."/>
            <person name="Maglott D."/>
            <person name="Birtle Z."/>
            <person name="Marques A.C."/>
            <person name="Graves T."/>
            <person name="Zhou S."/>
            <person name="Teague B."/>
            <person name="Potamousis K."/>
            <person name="Churas C."/>
            <person name="Place M."/>
            <person name="Herschleb J."/>
            <person name="Runnheim R."/>
            <person name="Forrest D."/>
            <person name="Amos-Landgraf J."/>
            <person name="Schwartz D.C."/>
            <person name="Cheng Z."/>
            <person name="Lindblad-Toh K."/>
            <person name="Eichler E.E."/>
            <person name="Ponting C.P."/>
        </authorList>
    </citation>
    <scope>NUCLEOTIDE SEQUENCE [LARGE SCALE GENOMIC DNA]</scope>
    <source>
        <strain>C57BL/6J</strain>
    </source>
</reference>
<reference key="3">
    <citation type="submission" date="2005-07" db="EMBL/GenBank/DDBJ databases">
        <authorList>
            <person name="Mural R.J."/>
            <person name="Adams M.D."/>
            <person name="Myers E.W."/>
            <person name="Smith H.O."/>
            <person name="Venter J.C."/>
        </authorList>
    </citation>
    <scope>NUCLEOTIDE SEQUENCE [LARGE SCALE GENOMIC DNA]</scope>
</reference>
<reference key="4">
    <citation type="journal article" date="2004" name="Genome Res.">
        <title>The status, quality, and expansion of the NIH full-length cDNA project: the Mammalian Gene Collection (MGC).</title>
        <authorList>
            <consortium name="The MGC Project Team"/>
        </authorList>
    </citation>
    <scope>NUCLEOTIDE SEQUENCE [LARGE SCALE MRNA]</scope>
    <source>
        <strain>C57BL/6J</strain>
        <tissue>Brain</tissue>
    </source>
</reference>
<reference key="5">
    <citation type="journal article" date="1998" name="Neuron">
        <title>An olfactory sensory map develops in the absence of normal projection neurons or GABAergic interneurons.</title>
        <authorList>
            <person name="Bulfone A."/>
            <person name="Wang F."/>
            <person name="Hevner R."/>
            <person name="Anderson S."/>
            <person name="Cutforth T."/>
            <person name="Chen S."/>
            <person name="Meneses J."/>
            <person name="Pedersen R."/>
            <person name="Axel R."/>
            <person name="Rubenstein J.L."/>
        </authorList>
    </citation>
    <scope>FUNCTION</scope>
    <scope>TISSUE SPECIFICITY</scope>
    <scope>DISRUPTION PHENOTYPE</scope>
</reference>
<reference key="6">
    <citation type="journal article" date="2001" name="Neuron">
        <title>Tbr1 regulates differentiation of the preplate and layer 6.</title>
        <authorList>
            <person name="Hevner R.F."/>
            <person name="Shi L."/>
            <person name="Justice N."/>
            <person name="Hsueh Y."/>
            <person name="Sheng M."/>
            <person name="Smiga S."/>
            <person name="Bulfone A."/>
            <person name="Goffinet A.M."/>
            <person name="Campagnoni A.T."/>
            <person name="Rubenstein J.L."/>
        </authorList>
    </citation>
    <scope>FUNCTION</scope>
    <scope>TISSUE SPECIFICITY</scope>
    <scope>DISRUPTION PHENOTYPE</scope>
</reference>
<reference key="7">
    <citation type="journal article" date="2004" name="Neuron">
        <title>Transcriptional modification by a CASK-interacting nucleosome assembly protein.</title>
        <authorList>
            <person name="Wang G.-S."/>
            <person name="Hong C.-J."/>
            <person name="Yen T.-Y."/>
            <person name="Huang H.-Y."/>
            <person name="Ou Y."/>
            <person name="Huang T.-N."/>
            <person name="Jung W.-G."/>
            <person name="Kuo T.-Y."/>
            <person name="Sheng M."/>
            <person name="Wang T.-F."/>
            <person name="Hsueh Y.-P."/>
        </authorList>
    </citation>
    <scope>IDENTIFICATION IN COMPLEX WITH CASK AND TBR1</scope>
    <source>
        <strain>C57BL/6J</strain>
    </source>
</reference>
<reference key="8">
    <citation type="journal article" date="2006" name="Mol. Cell. Proteomics">
        <title>Comprehensive identification of phosphorylation sites in postsynaptic density preparations.</title>
        <authorList>
            <person name="Trinidad J.C."/>
            <person name="Specht C.G."/>
            <person name="Thalhammer A."/>
            <person name="Schoepfer R."/>
            <person name="Burlingame A.L."/>
        </authorList>
    </citation>
    <scope>IDENTIFICATION BY MASS SPECTROMETRY [LARGE SCALE ANALYSIS]</scope>
    <source>
        <tissue>Brain</tissue>
    </source>
</reference>
<reference key="9">
    <citation type="journal article" date="2010" name="Cell">
        <title>A tissue-specific atlas of mouse protein phosphorylation and expression.</title>
        <authorList>
            <person name="Huttlin E.L."/>
            <person name="Jedrychowski M.P."/>
            <person name="Elias J.E."/>
            <person name="Goswami T."/>
            <person name="Rad R."/>
            <person name="Beausoleil S.A."/>
            <person name="Villen J."/>
            <person name="Haas W."/>
            <person name="Sowa M.E."/>
            <person name="Gygi S.P."/>
        </authorList>
    </citation>
    <scope>PHOSPHORYLATION [LARGE SCALE ANALYSIS] AT THR-408; SER-410; SER-594 AND SER-640</scope>
    <scope>IDENTIFICATION BY MASS SPECTROMETRY [LARGE SCALE ANALYSIS]</scope>
    <source>
        <tissue>Brain</tissue>
    </source>
</reference>
<reference key="10">
    <citation type="journal article" date="2011" name="Proc. Natl. Acad. Sci. U.S.A.">
        <title>TBR1 directly represses Fezf2 to control the laminar origin and development of the corticospinal tract.</title>
        <authorList>
            <person name="Han W."/>
            <person name="Kwan K.Y."/>
            <person name="Shim S."/>
            <person name="Lam M.M."/>
            <person name="Shin Y."/>
            <person name="Xu X."/>
            <person name="Zhu Y."/>
            <person name="Li M."/>
            <person name="Sestan N."/>
        </authorList>
    </citation>
    <scope>FUNCTION</scope>
</reference>
<proteinExistence type="evidence at protein level"/>
<sequence>MQLEHCLSPSIMLSKKFLNVSSSYPHSGGSELVLHDHPIISTTDNLERSSPLKKITRGMTNQSDTDNFPDSKDSPGDVQRSKLSPVLDGVSELRHSFDGSAADRYLLSQSSQPQSAATAPSAMFPYPSQHGPAHPAFSIGSPSRYMAHHPVITNGAYNSLLSNSSPQGYPTAGYPYPQQYGHSYQGAPFYQFSSTQPGLVPGKAQVYLCNRPLWLKFHRHQTEMIITKQGRRMFPFLSFNISGLDPTAHYNIFVDVILADPNHWRFQGGKWVPCGKADTNVQGNRVYMHPDSPNTGAHWMRQEISFGKLKLTNNKGASNNNGQMVVLQSLHKYQPRLHVVEVNEDGTEDTSQPGRVQTFTFPETQFIAVTAYQNTDITQLKIDHNPFAKGFRDNYDTIYTGCDMDRLTPSPNDSPRSQIVPGARYAMAGSFLQDQFVSNYAKARFHPGAGAGPGPGTDRSVPHTNGLLSPQQAEDPGAPSPQRWFVTPANNRLDFAASAYDTATDFAGNAATLLSYAAAGVKALPLQAAGCTGRPLGYYADPSGWGARSPPQYCGAKSGSVLPCWPNSAAAAARMAGANPYLGEEAEGLAAERSPLAPAAEDAKPKDLSDSSWIETPSSIKSIDSSDSGIYEQAKRRRISPADTPVSESSSPLKSEVLAQRDCEKNCAKDIGGYYGFYSHS</sequence>
<comment type="function">
    <text evidence="4 6 7">Transcriptional repressor involved in multiple aspects of cortical development, including neuronal migration, laminar and areal identity, and axonal projection (PubMed:11239428, PubMed:21285371, PubMed:9883721). As transcriptional repressor of FEZF2, it blocks the formation of the corticospinal (CS) tract from layer 6 projection neurons, thereby restricting the origin of CS axons specifically to layer 5 neurons (PubMed:21285371).</text>
</comment>
<comment type="subunit">
    <text evidence="1 5">Homodimer (By similarity). Part of a complex containing CASK, TBR1 and TSPYL2; may modulate gene expression in response to neuronal synaptic activity (PubMed:15066269). Forms homodimers (By similarity). Interacts with FOXP2 (By similarity). Interacts with FOXP1 (By similarity). Interacts with BCL11A (By similarity).</text>
</comment>
<comment type="subcellular location">
    <subcellularLocation>
        <location evidence="1">Nucleus</location>
    </subcellularLocation>
</comment>
<comment type="tissue specificity">
    <text evidence="4 7">Expressed in the developing and adult cortex (PubMed:11239428). Expressed in the olfactory bulbs (PubMed:9883721).</text>
</comment>
<comment type="developmental stage">
    <text>First detected around day 10 of embryonic development in the preplate, at day 12.5, in the cortical plate and intermediate zone, and from day 16.5 to 18.5, in a rostro-caudal gradient in the subplate. In the thalamus, expression is first observed at postnatal stage, P7, and weak expression continues in later postnatal and adult stages.</text>
</comment>
<comment type="disruption phenotype">
    <text evidence="4 7">Homozygous mutant mice do not nurse and die between postnatal days 1 and 3 (PubMed:11239428, PubMed:9883721). Brains are smaller than those of heterozygous or wild-type littermates, olfactory bulbs are small and olfactory bulb projection neurons are absent (PubMed:9883721). Mutant mice show severe defects of cortical development (PubMed:11239428).</text>
</comment>
<dbReference type="EMBL" id="U49251">
    <property type="protein sequence ID" value="AAA92011.1"/>
    <property type="molecule type" value="mRNA"/>
</dbReference>
<dbReference type="EMBL" id="AL845291">
    <property type="status" value="NOT_ANNOTATED_CDS"/>
    <property type="molecule type" value="Genomic_DNA"/>
</dbReference>
<dbReference type="EMBL" id="CH466519">
    <property type="protein sequence ID" value="EDL26982.1"/>
    <property type="molecule type" value="Genomic_DNA"/>
</dbReference>
<dbReference type="EMBL" id="BC052737">
    <property type="protein sequence ID" value="AAH52737.1"/>
    <property type="molecule type" value="mRNA"/>
</dbReference>
<dbReference type="EMBL" id="BC058399">
    <property type="protein sequence ID" value="AAH58399.1"/>
    <property type="molecule type" value="mRNA"/>
</dbReference>
<dbReference type="CCDS" id="CCDS16063.1"/>
<dbReference type="RefSeq" id="NP_033348.2">
    <property type="nucleotide sequence ID" value="NM_009322.3"/>
</dbReference>
<dbReference type="RefSeq" id="XP_006499161.1">
    <property type="nucleotide sequence ID" value="XM_006499098.5"/>
</dbReference>
<dbReference type="SMR" id="Q64336"/>
<dbReference type="BioGRID" id="203979">
    <property type="interactions" value="1"/>
</dbReference>
<dbReference type="FunCoup" id="Q64336">
    <property type="interactions" value="1081"/>
</dbReference>
<dbReference type="STRING" id="10090.ENSMUSP00000046787"/>
<dbReference type="GlyGen" id="Q64336">
    <property type="glycosylation" value="4 sites, 1 N-linked glycan (1 site), 1 O-linked glycan (2 sites)"/>
</dbReference>
<dbReference type="iPTMnet" id="Q64336"/>
<dbReference type="PhosphoSitePlus" id="Q64336"/>
<dbReference type="PaxDb" id="10090-ENSMUSP00000046787"/>
<dbReference type="ProteomicsDB" id="263012"/>
<dbReference type="Antibodypedia" id="35331">
    <property type="antibodies" value="206 antibodies from 32 providers"/>
</dbReference>
<dbReference type="DNASU" id="21375"/>
<dbReference type="Ensembl" id="ENSMUST00000048934.15">
    <property type="protein sequence ID" value="ENSMUSP00000046787.9"/>
    <property type="gene ID" value="ENSMUSG00000035033.16"/>
</dbReference>
<dbReference type="GeneID" id="21375"/>
<dbReference type="KEGG" id="mmu:21375"/>
<dbReference type="UCSC" id="uc008jvd.1">
    <property type="organism name" value="mouse"/>
</dbReference>
<dbReference type="AGR" id="MGI:107404"/>
<dbReference type="CTD" id="10716"/>
<dbReference type="MGI" id="MGI:107404">
    <property type="gene designation" value="Tbr1"/>
</dbReference>
<dbReference type="VEuPathDB" id="HostDB:ENSMUSG00000035033"/>
<dbReference type="eggNOG" id="KOG3585">
    <property type="taxonomic scope" value="Eukaryota"/>
</dbReference>
<dbReference type="GeneTree" id="ENSGT00940000156994"/>
<dbReference type="HOGENOM" id="CLU_014430_8_1_1"/>
<dbReference type="InParanoid" id="Q64336"/>
<dbReference type="OMA" id="NRALGYY"/>
<dbReference type="OrthoDB" id="7442607at2759"/>
<dbReference type="PhylomeDB" id="Q64336"/>
<dbReference type="TreeFam" id="TF106341"/>
<dbReference type="BioGRID-ORCS" id="21375">
    <property type="hits" value="1 hit in 77 CRISPR screens"/>
</dbReference>
<dbReference type="ChiTaRS" id="Tbr1">
    <property type="organism name" value="mouse"/>
</dbReference>
<dbReference type="PRO" id="PR:Q64336"/>
<dbReference type="Proteomes" id="UP000000589">
    <property type="component" value="Chromosome 2"/>
</dbReference>
<dbReference type="RNAct" id="Q64336">
    <property type="molecule type" value="protein"/>
</dbReference>
<dbReference type="Bgee" id="ENSMUSG00000035033">
    <property type="expression patterns" value="Expressed in cortical plate and 109 other cell types or tissues"/>
</dbReference>
<dbReference type="ExpressionAtlas" id="Q64336">
    <property type="expression patterns" value="baseline and differential"/>
</dbReference>
<dbReference type="GO" id="GO:0005634">
    <property type="term" value="C:nucleus"/>
    <property type="evidence" value="ECO:0000314"/>
    <property type="project" value="MGI"/>
</dbReference>
<dbReference type="GO" id="GO:0031490">
    <property type="term" value="F:chromatin DNA binding"/>
    <property type="evidence" value="ECO:0000314"/>
    <property type="project" value="MGI"/>
</dbReference>
<dbReference type="GO" id="GO:0003677">
    <property type="term" value="F:DNA binding"/>
    <property type="evidence" value="ECO:0000314"/>
    <property type="project" value="MGI"/>
</dbReference>
<dbReference type="GO" id="GO:0001228">
    <property type="term" value="F:DNA-binding transcription activator activity, RNA polymerase II-specific"/>
    <property type="evidence" value="ECO:0000305"/>
    <property type="project" value="NTNU_SB"/>
</dbReference>
<dbReference type="GO" id="GO:0003700">
    <property type="term" value="F:DNA-binding transcription factor activity"/>
    <property type="evidence" value="ECO:0000314"/>
    <property type="project" value="MGI"/>
</dbReference>
<dbReference type="GO" id="GO:0019901">
    <property type="term" value="F:protein kinase binding"/>
    <property type="evidence" value="ECO:0007669"/>
    <property type="project" value="Ensembl"/>
</dbReference>
<dbReference type="GO" id="GO:0000978">
    <property type="term" value="F:RNA polymerase II cis-regulatory region sequence-specific DNA binding"/>
    <property type="evidence" value="ECO:0000314"/>
    <property type="project" value="MGI"/>
</dbReference>
<dbReference type="GO" id="GO:0021764">
    <property type="term" value="P:amygdala development"/>
    <property type="evidence" value="ECO:0000315"/>
    <property type="project" value="MGI"/>
</dbReference>
<dbReference type="GO" id="GO:0021987">
    <property type="term" value="P:cerebral cortex development"/>
    <property type="evidence" value="ECO:0000315"/>
    <property type="project" value="MGI"/>
</dbReference>
<dbReference type="GO" id="GO:0006338">
    <property type="term" value="P:chromatin remodeling"/>
    <property type="evidence" value="ECO:0000315"/>
    <property type="project" value="MGI"/>
</dbReference>
<dbReference type="GO" id="GO:0021902">
    <property type="term" value="P:commitment of neuronal cell to specific neuron type in forebrain"/>
    <property type="evidence" value="ECO:0000316"/>
    <property type="project" value="MGI"/>
</dbReference>
<dbReference type="GO" id="GO:0001661">
    <property type="term" value="P:conditioned taste aversion"/>
    <property type="evidence" value="ECO:0000315"/>
    <property type="project" value="MGI"/>
</dbReference>
<dbReference type="GO" id="GO:0010467">
    <property type="term" value="P:gene expression"/>
    <property type="evidence" value="ECO:0000315"/>
    <property type="project" value="MGI"/>
</dbReference>
<dbReference type="GO" id="GO:0030902">
    <property type="term" value="P:hindbrain development"/>
    <property type="evidence" value="ECO:0000315"/>
    <property type="project" value="MGI"/>
</dbReference>
<dbReference type="GO" id="GO:0045892">
    <property type="term" value="P:negative regulation of DNA-templated transcription"/>
    <property type="evidence" value="ECO:0007669"/>
    <property type="project" value="Ensembl"/>
</dbReference>
<dbReference type="GO" id="GO:0030182">
    <property type="term" value="P:neuron differentiation"/>
    <property type="evidence" value="ECO:0000315"/>
    <property type="project" value="MGI"/>
</dbReference>
<dbReference type="GO" id="GO:0045944">
    <property type="term" value="P:positive regulation of transcription by RNA polymerase II"/>
    <property type="evidence" value="ECO:0000314"/>
    <property type="project" value="MGI"/>
</dbReference>
<dbReference type="GO" id="GO:1902667">
    <property type="term" value="P:regulation of axon guidance"/>
    <property type="evidence" value="ECO:0000315"/>
    <property type="project" value="MGI"/>
</dbReference>
<dbReference type="GO" id="GO:0010468">
    <property type="term" value="P:regulation of gene expression"/>
    <property type="evidence" value="ECO:0000315"/>
    <property type="project" value="MGI"/>
</dbReference>
<dbReference type="GO" id="GO:0010975">
    <property type="term" value="P:regulation of neuron projection development"/>
    <property type="evidence" value="ECO:0000315"/>
    <property type="project" value="MGI"/>
</dbReference>
<dbReference type="GO" id="GO:0010092">
    <property type="term" value="P:specification of animal organ identity"/>
    <property type="evidence" value="ECO:0000315"/>
    <property type="project" value="MGI"/>
</dbReference>
<dbReference type="CDD" id="cd20204">
    <property type="entry name" value="T-box_TBR1"/>
    <property type="match status" value="1"/>
</dbReference>
<dbReference type="FunFam" id="2.60.40.820:FF:000004">
    <property type="entry name" value="T-box, brain 1"/>
    <property type="match status" value="1"/>
</dbReference>
<dbReference type="Gene3D" id="2.60.40.820">
    <property type="entry name" value="Transcription factor, T-box"/>
    <property type="match status" value="1"/>
</dbReference>
<dbReference type="InterPro" id="IPR008967">
    <property type="entry name" value="p53-like_TF_DNA-bd_sf"/>
</dbReference>
<dbReference type="InterPro" id="IPR032385">
    <property type="entry name" value="T-box_assoc"/>
</dbReference>
<dbReference type="InterPro" id="IPR046360">
    <property type="entry name" value="T-box_DNA-bd"/>
</dbReference>
<dbReference type="InterPro" id="IPR036960">
    <property type="entry name" value="T-box_sf"/>
</dbReference>
<dbReference type="InterPro" id="IPR001699">
    <property type="entry name" value="TF_T-box"/>
</dbReference>
<dbReference type="InterPro" id="IPR018186">
    <property type="entry name" value="TF_T-box_CS"/>
</dbReference>
<dbReference type="PANTHER" id="PTHR11267:SF88">
    <property type="entry name" value="T-BOX BRAIN PROTEIN 1"/>
    <property type="match status" value="1"/>
</dbReference>
<dbReference type="PANTHER" id="PTHR11267">
    <property type="entry name" value="T-BOX PROTEIN-RELATED"/>
    <property type="match status" value="1"/>
</dbReference>
<dbReference type="Pfam" id="PF00907">
    <property type="entry name" value="T-box"/>
    <property type="match status" value="1"/>
</dbReference>
<dbReference type="Pfam" id="PF16176">
    <property type="entry name" value="T-box_assoc"/>
    <property type="match status" value="1"/>
</dbReference>
<dbReference type="PRINTS" id="PR00937">
    <property type="entry name" value="TBOX"/>
</dbReference>
<dbReference type="SMART" id="SM00425">
    <property type="entry name" value="TBOX"/>
    <property type="match status" value="1"/>
</dbReference>
<dbReference type="SUPFAM" id="SSF49417">
    <property type="entry name" value="p53-like transcription factors"/>
    <property type="match status" value="1"/>
</dbReference>
<dbReference type="PROSITE" id="PS01283">
    <property type="entry name" value="TBOX_1"/>
    <property type="match status" value="1"/>
</dbReference>
<dbReference type="PROSITE" id="PS01264">
    <property type="entry name" value="TBOX_2"/>
    <property type="match status" value="1"/>
</dbReference>
<dbReference type="PROSITE" id="PS50252">
    <property type="entry name" value="TBOX_3"/>
    <property type="match status" value="1"/>
</dbReference>